<gene>
    <name evidence="1" type="primary">tmk</name>
    <name type="ordered locus">Shewmr4_1661</name>
</gene>
<evidence type="ECO:0000255" key="1">
    <source>
        <dbReference type="HAMAP-Rule" id="MF_00165"/>
    </source>
</evidence>
<feature type="chain" id="PRO_1000023279" description="Thymidylate kinase">
    <location>
        <begin position="1"/>
        <end position="209"/>
    </location>
</feature>
<feature type="binding site" evidence="1">
    <location>
        <begin position="13"/>
        <end position="20"/>
    </location>
    <ligand>
        <name>ATP</name>
        <dbReference type="ChEBI" id="CHEBI:30616"/>
    </ligand>
</feature>
<protein>
    <recommendedName>
        <fullName evidence="1">Thymidylate kinase</fullName>
        <ecNumber evidence="1">2.7.4.9</ecNumber>
    </recommendedName>
    <alternativeName>
        <fullName evidence="1">dTMP kinase</fullName>
    </alternativeName>
</protein>
<organism>
    <name type="scientific">Shewanella sp. (strain MR-4)</name>
    <dbReference type="NCBI Taxonomy" id="60480"/>
    <lineage>
        <taxon>Bacteria</taxon>
        <taxon>Pseudomonadati</taxon>
        <taxon>Pseudomonadota</taxon>
        <taxon>Gammaproteobacteria</taxon>
        <taxon>Alteromonadales</taxon>
        <taxon>Shewanellaceae</taxon>
        <taxon>Shewanella</taxon>
    </lineage>
</organism>
<keyword id="KW-0067">ATP-binding</keyword>
<keyword id="KW-0418">Kinase</keyword>
<keyword id="KW-0545">Nucleotide biosynthesis</keyword>
<keyword id="KW-0547">Nucleotide-binding</keyword>
<keyword id="KW-0808">Transferase</keyword>
<comment type="function">
    <text evidence="1">Phosphorylation of dTMP to form dTDP in both de novo and salvage pathways of dTTP synthesis.</text>
</comment>
<comment type="catalytic activity">
    <reaction evidence="1">
        <text>dTMP + ATP = dTDP + ADP</text>
        <dbReference type="Rhea" id="RHEA:13517"/>
        <dbReference type="ChEBI" id="CHEBI:30616"/>
        <dbReference type="ChEBI" id="CHEBI:58369"/>
        <dbReference type="ChEBI" id="CHEBI:63528"/>
        <dbReference type="ChEBI" id="CHEBI:456216"/>
        <dbReference type="EC" id="2.7.4.9"/>
    </reaction>
</comment>
<comment type="similarity">
    <text evidence="1">Belongs to the thymidylate kinase family.</text>
</comment>
<proteinExistence type="inferred from homology"/>
<dbReference type="EC" id="2.7.4.9" evidence="1"/>
<dbReference type="EMBL" id="CP000446">
    <property type="protein sequence ID" value="ABI38737.1"/>
    <property type="molecule type" value="Genomic_DNA"/>
</dbReference>
<dbReference type="RefSeq" id="WP_011622437.1">
    <property type="nucleotide sequence ID" value="NC_008321.1"/>
</dbReference>
<dbReference type="SMR" id="Q0HJN0"/>
<dbReference type="KEGG" id="she:Shewmr4_1661"/>
<dbReference type="HOGENOM" id="CLU_049131_0_1_6"/>
<dbReference type="GO" id="GO:0005829">
    <property type="term" value="C:cytosol"/>
    <property type="evidence" value="ECO:0007669"/>
    <property type="project" value="TreeGrafter"/>
</dbReference>
<dbReference type="GO" id="GO:0005524">
    <property type="term" value="F:ATP binding"/>
    <property type="evidence" value="ECO:0007669"/>
    <property type="project" value="UniProtKB-UniRule"/>
</dbReference>
<dbReference type="GO" id="GO:0004798">
    <property type="term" value="F:dTMP kinase activity"/>
    <property type="evidence" value="ECO:0007669"/>
    <property type="project" value="UniProtKB-UniRule"/>
</dbReference>
<dbReference type="GO" id="GO:0006233">
    <property type="term" value="P:dTDP biosynthetic process"/>
    <property type="evidence" value="ECO:0007669"/>
    <property type="project" value="InterPro"/>
</dbReference>
<dbReference type="GO" id="GO:0006235">
    <property type="term" value="P:dTTP biosynthetic process"/>
    <property type="evidence" value="ECO:0007669"/>
    <property type="project" value="UniProtKB-UniRule"/>
</dbReference>
<dbReference type="GO" id="GO:0006227">
    <property type="term" value="P:dUDP biosynthetic process"/>
    <property type="evidence" value="ECO:0007669"/>
    <property type="project" value="TreeGrafter"/>
</dbReference>
<dbReference type="CDD" id="cd01672">
    <property type="entry name" value="TMPK"/>
    <property type="match status" value="1"/>
</dbReference>
<dbReference type="FunFam" id="3.40.50.300:FF:000321">
    <property type="entry name" value="Thymidylate kinase"/>
    <property type="match status" value="1"/>
</dbReference>
<dbReference type="Gene3D" id="3.40.50.300">
    <property type="entry name" value="P-loop containing nucleotide triphosphate hydrolases"/>
    <property type="match status" value="1"/>
</dbReference>
<dbReference type="HAMAP" id="MF_00165">
    <property type="entry name" value="Thymidylate_kinase"/>
    <property type="match status" value="1"/>
</dbReference>
<dbReference type="InterPro" id="IPR027417">
    <property type="entry name" value="P-loop_NTPase"/>
</dbReference>
<dbReference type="InterPro" id="IPR039430">
    <property type="entry name" value="Thymidylate_kin-like_dom"/>
</dbReference>
<dbReference type="InterPro" id="IPR018095">
    <property type="entry name" value="Thymidylate_kin_CS"/>
</dbReference>
<dbReference type="InterPro" id="IPR018094">
    <property type="entry name" value="Thymidylate_kinase"/>
</dbReference>
<dbReference type="NCBIfam" id="TIGR00041">
    <property type="entry name" value="DTMP_kinase"/>
    <property type="match status" value="1"/>
</dbReference>
<dbReference type="PANTHER" id="PTHR10344">
    <property type="entry name" value="THYMIDYLATE KINASE"/>
    <property type="match status" value="1"/>
</dbReference>
<dbReference type="PANTHER" id="PTHR10344:SF4">
    <property type="entry name" value="UMP-CMP KINASE 2, MITOCHONDRIAL"/>
    <property type="match status" value="1"/>
</dbReference>
<dbReference type="Pfam" id="PF02223">
    <property type="entry name" value="Thymidylate_kin"/>
    <property type="match status" value="1"/>
</dbReference>
<dbReference type="SUPFAM" id="SSF52540">
    <property type="entry name" value="P-loop containing nucleoside triphosphate hydrolases"/>
    <property type="match status" value="1"/>
</dbReference>
<dbReference type="PROSITE" id="PS01331">
    <property type="entry name" value="THYMIDYLATE_KINASE"/>
    <property type="match status" value="1"/>
</dbReference>
<accession>Q0HJN0</accession>
<sequence length="209" mass="22695">MTQASAKFIVVEGLEGAGKSSAIALIRDFIEKHTGLAPVCTREPGGTPLAERIRDLVKIADPSDPLCDESECLLIYAARAQLVANVIKPALAEGKWVLGDRHNLSSLAYQGGGRGLMPLVEAVSNATLKGFKPDLTLYLDLDPKLGLQRAAKRGELDRIEQQAIDFFERARATYLKLASEDEQIVVIDASQTMAEVHKDILAVLQAMAW</sequence>
<name>KTHY_SHESM</name>
<reference key="1">
    <citation type="submission" date="2006-08" db="EMBL/GenBank/DDBJ databases">
        <title>Complete sequence of Shewanella sp. MR-4.</title>
        <authorList>
            <consortium name="US DOE Joint Genome Institute"/>
            <person name="Copeland A."/>
            <person name="Lucas S."/>
            <person name="Lapidus A."/>
            <person name="Barry K."/>
            <person name="Detter J.C."/>
            <person name="Glavina del Rio T."/>
            <person name="Hammon N."/>
            <person name="Israni S."/>
            <person name="Dalin E."/>
            <person name="Tice H."/>
            <person name="Pitluck S."/>
            <person name="Kiss H."/>
            <person name="Brettin T."/>
            <person name="Bruce D."/>
            <person name="Han C."/>
            <person name="Tapia R."/>
            <person name="Gilna P."/>
            <person name="Schmutz J."/>
            <person name="Larimer F."/>
            <person name="Land M."/>
            <person name="Hauser L."/>
            <person name="Kyrpides N."/>
            <person name="Mikhailova N."/>
            <person name="Nealson K."/>
            <person name="Konstantinidis K."/>
            <person name="Klappenbach J."/>
            <person name="Tiedje J."/>
            <person name="Richardson P."/>
        </authorList>
    </citation>
    <scope>NUCLEOTIDE SEQUENCE [LARGE SCALE GENOMIC DNA]</scope>
    <source>
        <strain>MR-4</strain>
    </source>
</reference>